<gene>
    <name evidence="5" type="primary">sox-3</name>
    <name evidence="5" type="ORF">F40E10.2</name>
</gene>
<sequence length="212" mass="23770">MTDLSCLYPSLLCTEAAKTSYDEDTTSVSSGLSPPGSPVDLQNSLDHVKRPMNAFMVWSRGQRRKMAQDNPKMHNSEISKRLGAEWKQLSEQEKRPFIDEAKRLRALHMKEHPDYKYRPRRKPKSSNLKQQPRLNIAMPTIPPQSLFNYSTAFDSLKTHDLSQYYSSFFQSPVLSGSTYAPYNMMAAYARQAAAVAAASQVSASTTPTAPAT</sequence>
<evidence type="ECO:0000255" key="1">
    <source>
        <dbReference type="PROSITE-ProRule" id="PRU00267"/>
    </source>
</evidence>
<evidence type="ECO:0000269" key="2">
    <source>
    </source>
</evidence>
<evidence type="ECO:0000305" key="3"/>
<evidence type="ECO:0000312" key="4">
    <source>
        <dbReference type="Proteomes" id="UP000001940"/>
    </source>
</evidence>
<evidence type="ECO:0000312" key="5">
    <source>
        <dbReference type="WormBase" id="F40E10.2"/>
    </source>
</evidence>
<organism evidence="4">
    <name type="scientific">Caenorhabditis elegans</name>
    <dbReference type="NCBI Taxonomy" id="6239"/>
    <lineage>
        <taxon>Eukaryota</taxon>
        <taxon>Metazoa</taxon>
        <taxon>Ecdysozoa</taxon>
        <taxon>Nematoda</taxon>
        <taxon>Chromadorea</taxon>
        <taxon>Rhabditida</taxon>
        <taxon>Rhabditina</taxon>
        <taxon>Rhabditomorpha</taxon>
        <taxon>Rhabditoidea</taxon>
        <taxon>Rhabditidae</taxon>
        <taxon>Peloderinae</taxon>
        <taxon>Caenorhabditis</taxon>
    </lineage>
</organism>
<comment type="function">
    <text evidence="2">Probable transcription factor (PubMed:26153233). Involved in the terminal differentiation of some neuronal cell types (PubMed:26153233). Dispensable for neuronal fate commitment during embryogenesis (PubMed:26153233).</text>
</comment>
<comment type="subcellular location">
    <subcellularLocation>
        <location evidence="1">Nucleus</location>
    </subcellularLocation>
</comment>
<comment type="developmental stage">
    <text evidence="2">Expressed in several differentiated postmitotic neurons during embryogenesis, but not in neuroblasts (PubMed:26153233). Expressed in larvae and adults in sensory neurons ASK and OLQ, the SMB motor neurons, and the SAA neurons (PubMed:26153233).</text>
</comment>
<comment type="disruption phenotype">
    <text evidence="2">Expression of immunoglobulin superfamily adhesion molecules rig-5 and lad-2 is abolished in the dorsal and ventral SAA neurons, while expression of the neuropeptide flp-7 gene is lost in the dorsal SAA subtype but remains unaffected in the ventral SAA subtype (PubMed:26153233). No effect on the number of rab-3 expressing neurons on a sox-2 mutant background (PubMed:26153233).</text>
</comment>
<name>SOX3_CAEEL</name>
<dbReference type="EMBL" id="BX284606">
    <property type="protein sequence ID" value="CAA93665.1"/>
    <property type="molecule type" value="Genomic_DNA"/>
</dbReference>
<dbReference type="PIR" id="T22022">
    <property type="entry name" value="T22022"/>
</dbReference>
<dbReference type="RefSeq" id="NP_510439.1">
    <property type="nucleotide sequence ID" value="NM_078038.6"/>
</dbReference>
<dbReference type="SMR" id="Q20201"/>
<dbReference type="IntAct" id="Q20201">
    <property type="interactions" value="9"/>
</dbReference>
<dbReference type="STRING" id="6239.F40E10.2.1"/>
<dbReference type="PaxDb" id="6239-F40E10.2"/>
<dbReference type="EnsemblMetazoa" id="F40E10.2.1">
    <property type="protein sequence ID" value="F40E10.2.1"/>
    <property type="gene ID" value="WBGene00004950"/>
</dbReference>
<dbReference type="EnsemblMetazoa" id="F40E10.2.2">
    <property type="protein sequence ID" value="F40E10.2.2"/>
    <property type="gene ID" value="WBGene00004950"/>
</dbReference>
<dbReference type="GeneID" id="185534"/>
<dbReference type="KEGG" id="cel:CELE_F40E10.2"/>
<dbReference type="UCSC" id="F40E10.2">
    <property type="organism name" value="c. elegans"/>
</dbReference>
<dbReference type="AGR" id="WB:WBGene00004950"/>
<dbReference type="CTD" id="185534"/>
<dbReference type="WormBase" id="F40E10.2">
    <property type="protein sequence ID" value="CE05838"/>
    <property type="gene ID" value="WBGene00004950"/>
    <property type="gene designation" value="sox-3"/>
</dbReference>
<dbReference type="eggNOG" id="KOG0527">
    <property type="taxonomic scope" value="Eukaryota"/>
</dbReference>
<dbReference type="GeneTree" id="ENSGT00940000160614"/>
<dbReference type="HOGENOM" id="CLU_094362_0_0_1"/>
<dbReference type="InParanoid" id="Q20201"/>
<dbReference type="OMA" id="YNMMAAY"/>
<dbReference type="OrthoDB" id="6247875at2759"/>
<dbReference type="PhylomeDB" id="Q20201"/>
<dbReference type="Reactome" id="R-CEL-3769402">
    <property type="pathway name" value="Deactivation of the beta-catenin transactivating complex"/>
</dbReference>
<dbReference type="SignaLink" id="Q20201"/>
<dbReference type="PRO" id="PR:Q20201"/>
<dbReference type="Proteomes" id="UP000001940">
    <property type="component" value="Chromosome X"/>
</dbReference>
<dbReference type="Bgee" id="WBGene00004950">
    <property type="expression patterns" value="Expressed in pharyngeal muscle cell (C elegans) and 30 other cell types or tissues"/>
</dbReference>
<dbReference type="GO" id="GO:0005634">
    <property type="term" value="C:nucleus"/>
    <property type="evidence" value="ECO:0000318"/>
    <property type="project" value="GO_Central"/>
</dbReference>
<dbReference type="GO" id="GO:0001228">
    <property type="term" value="F:DNA-binding transcription activator activity, RNA polymerase II-specific"/>
    <property type="evidence" value="ECO:0000318"/>
    <property type="project" value="GO_Central"/>
</dbReference>
<dbReference type="GO" id="GO:0000978">
    <property type="term" value="F:RNA polymerase II cis-regulatory region sequence-specific DNA binding"/>
    <property type="evidence" value="ECO:0000318"/>
    <property type="project" value="GO_Central"/>
</dbReference>
<dbReference type="GO" id="GO:0043565">
    <property type="term" value="F:sequence-specific DNA binding"/>
    <property type="evidence" value="ECO:0000250"/>
    <property type="project" value="WormBase"/>
</dbReference>
<dbReference type="GO" id="GO:0007420">
    <property type="term" value="P:brain development"/>
    <property type="evidence" value="ECO:0000318"/>
    <property type="project" value="GO_Central"/>
</dbReference>
<dbReference type="GO" id="GO:0000122">
    <property type="term" value="P:negative regulation of transcription by RNA polymerase II"/>
    <property type="evidence" value="ECO:0000318"/>
    <property type="project" value="GO_Central"/>
</dbReference>
<dbReference type="GO" id="GO:0030182">
    <property type="term" value="P:neuron differentiation"/>
    <property type="evidence" value="ECO:0000315"/>
    <property type="project" value="UniProtKB"/>
</dbReference>
<dbReference type="GO" id="GO:0045944">
    <property type="term" value="P:positive regulation of transcription by RNA polymerase II"/>
    <property type="evidence" value="ECO:0000318"/>
    <property type="project" value="GO_Central"/>
</dbReference>
<dbReference type="CDD" id="cd01388">
    <property type="entry name" value="HMG-box_SoxB"/>
    <property type="match status" value="1"/>
</dbReference>
<dbReference type="FunFam" id="1.10.30.10:FF:000002">
    <property type="entry name" value="transcription factor Sox-2"/>
    <property type="match status" value="1"/>
</dbReference>
<dbReference type="Gene3D" id="1.10.30.10">
    <property type="entry name" value="High mobility group box domain"/>
    <property type="match status" value="1"/>
</dbReference>
<dbReference type="InterPro" id="IPR009071">
    <property type="entry name" value="HMG_box_dom"/>
</dbReference>
<dbReference type="InterPro" id="IPR036910">
    <property type="entry name" value="HMG_box_dom_sf"/>
</dbReference>
<dbReference type="InterPro" id="IPR050140">
    <property type="entry name" value="SRY-related_HMG-box_TF-like"/>
</dbReference>
<dbReference type="PANTHER" id="PTHR10270">
    <property type="entry name" value="SOX TRANSCRIPTION FACTOR"/>
    <property type="match status" value="1"/>
</dbReference>
<dbReference type="PANTHER" id="PTHR10270:SF330">
    <property type="entry name" value="TRANSCRIPTION FACTOR SOX-3"/>
    <property type="match status" value="1"/>
</dbReference>
<dbReference type="Pfam" id="PF00505">
    <property type="entry name" value="HMG_box"/>
    <property type="match status" value="1"/>
</dbReference>
<dbReference type="SMART" id="SM00398">
    <property type="entry name" value="HMG"/>
    <property type="match status" value="1"/>
</dbReference>
<dbReference type="SUPFAM" id="SSF47095">
    <property type="entry name" value="HMG-box"/>
    <property type="match status" value="1"/>
</dbReference>
<dbReference type="PROSITE" id="PS50118">
    <property type="entry name" value="HMG_BOX_2"/>
    <property type="match status" value="1"/>
</dbReference>
<proteinExistence type="evidence at transcript level"/>
<accession>Q20201</accession>
<keyword id="KW-0238">DNA-binding</keyword>
<keyword id="KW-0539">Nucleus</keyword>
<keyword id="KW-1185">Reference proteome</keyword>
<keyword id="KW-0804">Transcription</keyword>
<keyword id="KW-0805">Transcription regulation</keyword>
<protein>
    <recommendedName>
        <fullName evidence="3">Transcription factor sox-3</fullName>
    </recommendedName>
</protein>
<reference evidence="4" key="1">
    <citation type="journal article" date="1998" name="Science">
        <title>Genome sequence of the nematode C. elegans: a platform for investigating biology.</title>
        <authorList>
            <consortium name="The C. elegans sequencing consortium"/>
        </authorList>
    </citation>
    <scope>NUCLEOTIDE SEQUENCE [LARGE SCALE GENOMIC DNA]</scope>
    <source>
        <strain evidence="4">Bristol N2</strain>
    </source>
</reference>
<reference evidence="3" key="2">
    <citation type="journal article" date="2015" name="Development">
        <title>C. elegans SoxB genes are dispensable for embryonic neurogenesis but required for terminal differentiation of specific neuron types.</title>
        <authorList>
            <person name="Vidal B."/>
            <person name="Santella A."/>
            <person name="Serrano-Saiz E."/>
            <person name="Bao Z."/>
            <person name="Chuang C.F."/>
            <person name="Hobert O."/>
        </authorList>
    </citation>
    <scope>FUNCTION</scope>
    <scope>DEVELOPMENTAL STAGE</scope>
    <scope>DISRUPTION PHENOTYPE</scope>
</reference>
<feature type="chain" id="PRO_0000452694" description="Transcription factor sox-3">
    <location>
        <begin position="1"/>
        <end position="212"/>
    </location>
</feature>
<feature type="DNA-binding region" description="HMG box" evidence="1">
    <location>
        <begin position="48"/>
        <end position="116"/>
    </location>
</feature>